<gene>
    <name evidence="1" type="primary">nsrR</name>
    <name type="ordered locus">SPA4184</name>
</gene>
<dbReference type="EMBL" id="CP000026">
    <property type="protein sequence ID" value="AAV79921.1"/>
    <property type="molecule type" value="Genomic_DNA"/>
</dbReference>
<dbReference type="RefSeq" id="WP_001177632.1">
    <property type="nucleotide sequence ID" value="NC_006511.1"/>
</dbReference>
<dbReference type="SMR" id="Q5PL57"/>
<dbReference type="KEGG" id="spt:SPA4184"/>
<dbReference type="HOGENOM" id="CLU_107144_2_1_6"/>
<dbReference type="Proteomes" id="UP000008185">
    <property type="component" value="Chromosome"/>
</dbReference>
<dbReference type="GO" id="GO:0005829">
    <property type="term" value="C:cytosol"/>
    <property type="evidence" value="ECO:0007669"/>
    <property type="project" value="TreeGrafter"/>
</dbReference>
<dbReference type="GO" id="GO:0051537">
    <property type="term" value="F:2 iron, 2 sulfur cluster binding"/>
    <property type="evidence" value="ECO:0007669"/>
    <property type="project" value="UniProtKB-KW"/>
</dbReference>
<dbReference type="GO" id="GO:0003700">
    <property type="term" value="F:DNA-binding transcription factor activity"/>
    <property type="evidence" value="ECO:0007669"/>
    <property type="project" value="UniProtKB-UniRule"/>
</dbReference>
<dbReference type="GO" id="GO:0003690">
    <property type="term" value="F:double-stranded DNA binding"/>
    <property type="evidence" value="ECO:0007669"/>
    <property type="project" value="UniProtKB-UniRule"/>
</dbReference>
<dbReference type="GO" id="GO:0005506">
    <property type="term" value="F:iron ion binding"/>
    <property type="evidence" value="ECO:0007669"/>
    <property type="project" value="UniProtKB-UniRule"/>
</dbReference>
<dbReference type="GO" id="GO:0045892">
    <property type="term" value="P:negative regulation of DNA-templated transcription"/>
    <property type="evidence" value="ECO:0007669"/>
    <property type="project" value="InterPro"/>
</dbReference>
<dbReference type="FunFam" id="1.10.10.10:FF:000105">
    <property type="entry name" value="HTH-type transcriptional repressor NsrR"/>
    <property type="match status" value="1"/>
</dbReference>
<dbReference type="Gene3D" id="1.10.10.10">
    <property type="entry name" value="Winged helix-like DNA-binding domain superfamily/Winged helix DNA-binding domain"/>
    <property type="match status" value="1"/>
</dbReference>
<dbReference type="HAMAP" id="MF_01177">
    <property type="entry name" value="HTH_type_NsrR"/>
    <property type="match status" value="1"/>
</dbReference>
<dbReference type="InterPro" id="IPR000944">
    <property type="entry name" value="Tscrpt_reg_Rrf2"/>
</dbReference>
<dbReference type="InterPro" id="IPR023761">
    <property type="entry name" value="Tscrpt_rep_HTH_NsrR"/>
</dbReference>
<dbReference type="InterPro" id="IPR036388">
    <property type="entry name" value="WH-like_DNA-bd_sf"/>
</dbReference>
<dbReference type="InterPro" id="IPR036390">
    <property type="entry name" value="WH_DNA-bd_sf"/>
</dbReference>
<dbReference type="NCBIfam" id="NF008240">
    <property type="entry name" value="PRK11014.1"/>
    <property type="match status" value="1"/>
</dbReference>
<dbReference type="NCBIfam" id="TIGR00738">
    <property type="entry name" value="rrf2_super"/>
    <property type="match status" value="1"/>
</dbReference>
<dbReference type="PANTHER" id="PTHR33221:SF4">
    <property type="entry name" value="HTH-TYPE TRANSCRIPTIONAL REPRESSOR NSRR"/>
    <property type="match status" value="1"/>
</dbReference>
<dbReference type="PANTHER" id="PTHR33221">
    <property type="entry name" value="WINGED HELIX-TURN-HELIX TRANSCRIPTIONAL REGULATOR, RRF2 FAMILY"/>
    <property type="match status" value="1"/>
</dbReference>
<dbReference type="Pfam" id="PF02082">
    <property type="entry name" value="Rrf2"/>
    <property type="match status" value="1"/>
</dbReference>
<dbReference type="SUPFAM" id="SSF46785">
    <property type="entry name" value="Winged helix' DNA-binding domain"/>
    <property type="match status" value="1"/>
</dbReference>
<dbReference type="PROSITE" id="PS51197">
    <property type="entry name" value="HTH_RRF2_2"/>
    <property type="match status" value="1"/>
</dbReference>
<keyword id="KW-0001">2Fe-2S</keyword>
<keyword id="KW-0238">DNA-binding</keyword>
<keyword id="KW-0408">Iron</keyword>
<keyword id="KW-0411">Iron-sulfur</keyword>
<keyword id="KW-0479">Metal-binding</keyword>
<keyword id="KW-0678">Repressor</keyword>
<keyword id="KW-0804">Transcription</keyword>
<keyword id="KW-0805">Transcription regulation</keyword>
<proteinExistence type="inferred from homology"/>
<protein>
    <recommendedName>
        <fullName evidence="1">HTH-type transcriptional repressor NsrR</fullName>
    </recommendedName>
</protein>
<organism>
    <name type="scientific">Salmonella paratyphi A (strain ATCC 9150 / SARB42)</name>
    <dbReference type="NCBI Taxonomy" id="295319"/>
    <lineage>
        <taxon>Bacteria</taxon>
        <taxon>Pseudomonadati</taxon>
        <taxon>Pseudomonadota</taxon>
        <taxon>Gammaproteobacteria</taxon>
        <taxon>Enterobacterales</taxon>
        <taxon>Enterobacteriaceae</taxon>
        <taxon>Salmonella</taxon>
    </lineage>
</organism>
<comment type="function">
    <text evidence="1">Nitric oxide-sensitive repressor of genes involved in protecting the cell against nitrosative stress. May require iron for activity.</text>
</comment>
<comment type="cofactor">
    <cofactor evidence="1">
        <name>[2Fe-2S] cluster</name>
        <dbReference type="ChEBI" id="CHEBI:190135"/>
    </cofactor>
    <text evidence="1">Binds 1 [2Fe-2S] cluster per subunit.</text>
</comment>
<feature type="chain" id="PRO_0000268945" description="HTH-type transcriptional repressor NsrR">
    <location>
        <begin position="1"/>
        <end position="141"/>
    </location>
</feature>
<feature type="domain" description="HTH rrf2-type" evidence="1">
    <location>
        <begin position="2"/>
        <end position="129"/>
    </location>
</feature>
<feature type="DNA-binding region" description="H-T-H motif" evidence="1">
    <location>
        <begin position="28"/>
        <end position="51"/>
    </location>
</feature>
<feature type="binding site" evidence="1">
    <location>
        <position position="91"/>
    </location>
    <ligand>
        <name>[2Fe-2S] cluster</name>
        <dbReference type="ChEBI" id="CHEBI:190135"/>
    </ligand>
</feature>
<feature type="binding site" evidence="1">
    <location>
        <position position="96"/>
    </location>
    <ligand>
        <name>[2Fe-2S] cluster</name>
        <dbReference type="ChEBI" id="CHEBI:190135"/>
    </ligand>
</feature>
<feature type="binding site" evidence="1">
    <location>
        <position position="102"/>
    </location>
    <ligand>
        <name>[2Fe-2S] cluster</name>
        <dbReference type="ChEBI" id="CHEBI:190135"/>
    </ligand>
</feature>
<accession>Q5PL57</accession>
<reference key="1">
    <citation type="journal article" date="2004" name="Nat. Genet.">
        <title>Comparison of genome degradation in Paratyphi A and Typhi, human-restricted serovars of Salmonella enterica that cause typhoid.</title>
        <authorList>
            <person name="McClelland M."/>
            <person name="Sanderson K.E."/>
            <person name="Clifton S.W."/>
            <person name="Latreille P."/>
            <person name="Porwollik S."/>
            <person name="Sabo A."/>
            <person name="Meyer R."/>
            <person name="Bieri T."/>
            <person name="Ozersky P."/>
            <person name="McLellan M."/>
            <person name="Harkins C.R."/>
            <person name="Wang C."/>
            <person name="Nguyen C."/>
            <person name="Berghoff A."/>
            <person name="Elliott G."/>
            <person name="Kohlberg S."/>
            <person name="Strong C."/>
            <person name="Du F."/>
            <person name="Carter J."/>
            <person name="Kremizki C."/>
            <person name="Layman D."/>
            <person name="Leonard S."/>
            <person name="Sun H."/>
            <person name="Fulton L."/>
            <person name="Nash W."/>
            <person name="Miner T."/>
            <person name="Minx P."/>
            <person name="Delehaunty K."/>
            <person name="Fronick C."/>
            <person name="Magrini V."/>
            <person name="Nhan M."/>
            <person name="Warren W."/>
            <person name="Florea L."/>
            <person name="Spieth J."/>
            <person name="Wilson R.K."/>
        </authorList>
    </citation>
    <scope>NUCLEOTIDE SEQUENCE [LARGE SCALE GENOMIC DNA]</scope>
    <source>
        <strain>ATCC 9150 / SARB42</strain>
    </source>
</reference>
<sequence length="141" mass="15608">MQLTSFTDYGLRALIYMASLPDGRMTSISEVTEVYGVSRNHMVKIINQLSRAGFVTAVRGKNGGIRLGKPANTICIGDVVRELEPLSLVNCSSEFCHITPACRLKQALSKAVQSFLKELDNYTLADLVEENQPLYKLLLVE</sequence>
<name>NSRR_SALPA</name>
<evidence type="ECO:0000255" key="1">
    <source>
        <dbReference type="HAMAP-Rule" id="MF_01177"/>
    </source>
</evidence>